<proteinExistence type="evidence at protein level"/>
<reference key="1">
    <citation type="journal article" date="2001" name="Lancet">
        <title>Whole genome sequencing of meticillin-resistant Staphylococcus aureus.</title>
        <authorList>
            <person name="Kuroda M."/>
            <person name="Ohta T."/>
            <person name="Uchiyama I."/>
            <person name="Baba T."/>
            <person name="Yuzawa H."/>
            <person name="Kobayashi I."/>
            <person name="Cui L."/>
            <person name="Oguchi A."/>
            <person name="Aoki K."/>
            <person name="Nagai Y."/>
            <person name="Lian J.-Q."/>
            <person name="Ito T."/>
            <person name="Kanamori M."/>
            <person name="Matsumaru H."/>
            <person name="Maruyama A."/>
            <person name="Murakami H."/>
            <person name="Hosoyama A."/>
            <person name="Mizutani-Ui Y."/>
            <person name="Takahashi N.K."/>
            <person name="Sawano T."/>
            <person name="Inoue R."/>
            <person name="Kaito C."/>
            <person name="Sekimizu K."/>
            <person name="Hirakawa H."/>
            <person name="Kuhara S."/>
            <person name="Goto S."/>
            <person name="Yabuzaki J."/>
            <person name="Kanehisa M."/>
            <person name="Yamashita A."/>
            <person name="Oshima K."/>
            <person name="Furuya K."/>
            <person name="Yoshino C."/>
            <person name="Shiba T."/>
            <person name="Hattori M."/>
            <person name="Ogasawara N."/>
            <person name="Hayashi H."/>
            <person name="Hiramatsu K."/>
        </authorList>
    </citation>
    <scope>NUCLEOTIDE SEQUENCE [LARGE SCALE GENOMIC DNA]</scope>
    <source>
        <strain>N315</strain>
    </source>
</reference>
<reference key="2">
    <citation type="submission" date="2007-10" db="UniProtKB">
        <title>Shotgun proteomic analysis of total and membrane protein extracts of S. aureus strain N315.</title>
        <authorList>
            <person name="Vaezzadeh A.R."/>
            <person name="Deshusses J."/>
            <person name="Lescuyer P."/>
            <person name="Hochstrasser D.F."/>
        </authorList>
    </citation>
    <scope>IDENTIFICATION BY MASS SPECTROMETRY [LARGE SCALE ANALYSIS]</scope>
    <source>
        <strain>N315</strain>
    </source>
</reference>
<name>PUTP_STAAN</name>
<sequence>MLTMGTALSQQVDANWQTYIMIAVYFLILIVIGFYGYKQATGNLSEYMLGGRSIGPYITALSAGASDMSGWMIMGLPGSVYSTGLSAMWITIGLTLGAYINYFVVAPRLRVYTELAGDAITLPDFFKNRLNDKNNVLKIISGLIIVVFFTLYTHSGFVSGGKLFESAFGLDYHFGLILVAFIVIFYTFFGGYLAVSITDFFQGVIMLIAMVMVPIVAMMNLNGWGTFHDVAAMKPTNLNLFKGLSFIGIISLFSWGLGYFGQPHIIVRFMSIKSHKMLPKARRLGISWMAVGLLGAVAVGLTGIAFVPAYHIKLEDPETLFIVMSQVLFHPLVGGFLLAAILAAIMSTISSQLLVTSSSLTEDFYKLIRGEEKAKTHQKEFVMIGRLSVLVVAIVAIAIAWNPNDTILNLVGNAWAGFGASFSPLVLFALYWKGLTRAGAVSGMVSGALVVIVWIAWIKPLAHINEIFGLYEIIPGFIVSVIVTYVVSKLTKKPGAFVETDLNKVRDIVREK</sequence>
<dbReference type="EMBL" id="BA000018">
    <property type="protein sequence ID" value="BAB42988.1"/>
    <property type="molecule type" value="Genomic_DNA"/>
</dbReference>
<dbReference type="PIR" id="E89978">
    <property type="entry name" value="E89978"/>
</dbReference>
<dbReference type="RefSeq" id="WP_000957020.1">
    <property type="nucleotide sequence ID" value="NC_002745.2"/>
</dbReference>
<dbReference type="SMR" id="Q7A4Q7"/>
<dbReference type="TCDB" id="2.A.21.2.2">
    <property type="family name" value="the solute:sodium symporter (sss) family"/>
</dbReference>
<dbReference type="EnsemblBacteria" id="BAB42988">
    <property type="protein sequence ID" value="BAB42988"/>
    <property type="gene ID" value="BAB42988"/>
</dbReference>
<dbReference type="KEGG" id="sau:SA1718"/>
<dbReference type="HOGENOM" id="CLU_018808_15_2_9"/>
<dbReference type="GO" id="GO:0005886">
    <property type="term" value="C:plasma membrane"/>
    <property type="evidence" value="ECO:0007669"/>
    <property type="project" value="UniProtKB-SubCell"/>
</dbReference>
<dbReference type="GO" id="GO:0015193">
    <property type="term" value="F:L-proline transmembrane transporter activity"/>
    <property type="evidence" value="ECO:0007669"/>
    <property type="project" value="TreeGrafter"/>
</dbReference>
<dbReference type="GO" id="GO:0005298">
    <property type="term" value="F:proline:sodium symporter activity"/>
    <property type="evidence" value="ECO:0007669"/>
    <property type="project" value="InterPro"/>
</dbReference>
<dbReference type="GO" id="GO:0031402">
    <property type="term" value="F:sodium ion binding"/>
    <property type="evidence" value="ECO:0007669"/>
    <property type="project" value="InterPro"/>
</dbReference>
<dbReference type="GO" id="GO:0015824">
    <property type="term" value="P:proline transport"/>
    <property type="evidence" value="ECO:0007669"/>
    <property type="project" value="InterPro"/>
</dbReference>
<dbReference type="CDD" id="cd11475">
    <property type="entry name" value="SLC5sbd_PutP"/>
    <property type="match status" value="1"/>
</dbReference>
<dbReference type="FunFam" id="1.20.1730.10:FF:000002">
    <property type="entry name" value="Sodium/proline symporter"/>
    <property type="match status" value="1"/>
</dbReference>
<dbReference type="Gene3D" id="1.20.1730.10">
    <property type="entry name" value="Sodium/glucose cotransporter"/>
    <property type="match status" value="1"/>
</dbReference>
<dbReference type="InterPro" id="IPR038377">
    <property type="entry name" value="Na/Glc_symporter_sf"/>
</dbReference>
<dbReference type="InterPro" id="IPR011851">
    <property type="entry name" value="Na/Pro_symporter"/>
</dbReference>
<dbReference type="InterPro" id="IPR001734">
    <property type="entry name" value="Na/solute_symporter"/>
</dbReference>
<dbReference type="InterPro" id="IPR050277">
    <property type="entry name" value="Sodium:Solute_Symporter"/>
</dbReference>
<dbReference type="NCBIfam" id="TIGR02121">
    <property type="entry name" value="Na_Pro_sym"/>
    <property type="match status" value="1"/>
</dbReference>
<dbReference type="NCBIfam" id="TIGR00813">
    <property type="entry name" value="sss"/>
    <property type="match status" value="1"/>
</dbReference>
<dbReference type="PANTHER" id="PTHR48086">
    <property type="entry name" value="SODIUM/PROLINE SYMPORTER-RELATED"/>
    <property type="match status" value="1"/>
</dbReference>
<dbReference type="PANTHER" id="PTHR48086:SF3">
    <property type="entry name" value="SODIUM_PROLINE SYMPORTER"/>
    <property type="match status" value="1"/>
</dbReference>
<dbReference type="Pfam" id="PF00474">
    <property type="entry name" value="SSF"/>
    <property type="match status" value="1"/>
</dbReference>
<dbReference type="PROSITE" id="PS50283">
    <property type="entry name" value="NA_SOLUT_SYMP_3"/>
    <property type="match status" value="1"/>
</dbReference>
<gene>
    <name type="primary">putP</name>
    <name type="ordered locus">SA1718</name>
</gene>
<evidence type="ECO:0000250" key="1">
    <source>
        <dbReference type="UniProtKB" id="P07117"/>
    </source>
</evidence>
<evidence type="ECO:0000250" key="2">
    <source>
        <dbReference type="UniProtKB" id="Q2FWY7"/>
    </source>
</evidence>
<evidence type="ECO:0000255" key="3"/>
<evidence type="ECO:0000305" key="4"/>
<protein>
    <recommendedName>
        <fullName>Sodium/proline symporter</fullName>
    </recommendedName>
    <alternativeName>
        <fullName>Proline permease</fullName>
    </alternativeName>
</protein>
<organism>
    <name type="scientific">Staphylococcus aureus (strain N315)</name>
    <dbReference type="NCBI Taxonomy" id="158879"/>
    <lineage>
        <taxon>Bacteria</taxon>
        <taxon>Bacillati</taxon>
        <taxon>Bacillota</taxon>
        <taxon>Bacilli</taxon>
        <taxon>Bacillales</taxon>
        <taxon>Staphylococcaceae</taxon>
        <taxon>Staphylococcus</taxon>
    </lineage>
</organism>
<comment type="function">
    <text evidence="1 2">Catalyzes the sodium-dependent uptake of extracellular L-proline (By similarity). Since most S.aureus strains are L-proline auxotrophs, this transporter may aid the bacterial persistence during an infection of tissues with low proline concentrations (By similarity).</text>
</comment>
<comment type="catalytic activity">
    <reaction evidence="1">
        <text>L-proline(in) + Na(+)(in) = L-proline(out) + Na(+)(out)</text>
        <dbReference type="Rhea" id="RHEA:28967"/>
        <dbReference type="ChEBI" id="CHEBI:29101"/>
        <dbReference type="ChEBI" id="CHEBI:60039"/>
    </reaction>
</comment>
<comment type="subcellular location">
    <subcellularLocation>
        <location evidence="4">Cell membrane</location>
        <topology evidence="3">Multi-pass membrane protein</topology>
    </subcellularLocation>
</comment>
<comment type="similarity">
    <text evidence="4">Belongs to the sodium:solute symporter (SSF) (TC 2.A.21) family.</text>
</comment>
<accession>Q7A4Q7</accession>
<feature type="chain" id="PRO_0000364101" description="Sodium/proline symporter">
    <location>
        <begin position="1"/>
        <end position="512"/>
    </location>
</feature>
<feature type="transmembrane region" description="Helical" evidence="3">
    <location>
        <begin position="16"/>
        <end position="36"/>
    </location>
</feature>
<feature type="transmembrane region" description="Helical" evidence="3">
    <location>
        <begin position="54"/>
        <end position="74"/>
    </location>
</feature>
<feature type="transmembrane region" description="Helical" evidence="3">
    <location>
        <begin position="85"/>
        <end position="105"/>
    </location>
</feature>
<feature type="transmembrane region" description="Helical" evidence="3">
    <location>
        <begin position="139"/>
        <end position="159"/>
    </location>
</feature>
<feature type="transmembrane region" description="Helical" evidence="3">
    <location>
        <begin position="174"/>
        <end position="194"/>
    </location>
</feature>
<feature type="transmembrane region" description="Helical" evidence="3">
    <location>
        <begin position="200"/>
        <end position="220"/>
    </location>
</feature>
<feature type="transmembrane region" description="Helical" evidence="3">
    <location>
        <begin position="240"/>
        <end position="260"/>
    </location>
</feature>
<feature type="transmembrane region" description="Helical" evidence="3">
    <location>
        <begin position="286"/>
        <end position="306"/>
    </location>
</feature>
<feature type="transmembrane region" description="Helical" evidence="3">
    <location>
        <begin position="327"/>
        <end position="347"/>
    </location>
</feature>
<feature type="transmembrane region" description="Helical" evidence="3">
    <location>
        <begin position="381"/>
        <end position="401"/>
    </location>
</feature>
<feature type="transmembrane region" description="Helical" evidence="3">
    <location>
        <begin position="410"/>
        <end position="430"/>
    </location>
</feature>
<feature type="transmembrane region" description="Helical" evidence="3">
    <location>
        <begin position="438"/>
        <end position="458"/>
    </location>
</feature>
<feature type="transmembrane region" description="Helical" evidence="3">
    <location>
        <begin position="467"/>
        <end position="487"/>
    </location>
</feature>
<keyword id="KW-0029">Amino-acid transport</keyword>
<keyword id="KW-1003">Cell membrane</keyword>
<keyword id="KW-0406">Ion transport</keyword>
<keyword id="KW-0472">Membrane</keyword>
<keyword id="KW-0915">Sodium</keyword>
<keyword id="KW-0739">Sodium transport</keyword>
<keyword id="KW-0769">Symport</keyword>
<keyword id="KW-0812">Transmembrane</keyword>
<keyword id="KW-1133">Transmembrane helix</keyword>
<keyword id="KW-0813">Transport</keyword>